<sequence length="401" mass="45333">MMGLGNGRRSMKSPPLVLAALVACIIVLGFNYWIASSRSVDLQTRIMELEGRVRRAAAERGAVELKKNEFQGELEKQREQLDKIQSSHNFQLESVNKLYQDEKAVLVNNITTGERLIRVLQDQLKTLQRNYGRLQQDVLQFQKNQTNLERKFSYDLSQCINQMKEVKEQCEERIEEVTKKGNEAVASRDLSENNDQRQQLQALSEPQPRLQAAGLPHTEVPQGKGNVLGNSKSQTPAPSSEVVLDSKRQVEKEETNEIQVVNEEPQRDRLPQEPGREQVVEDRPVGGRGFGGAGELGQTPQVQAALSVSQENPEMEGPERDQLVIPDGQEEEQEAAGEGRNQQKLRGEDDYNMDENEAESETDKQAALAGNDRNIDVFNVEDQKRDTINLLDQREKRNHTL</sequence>
<organism>
    <name type="scientific">Homo sapiens</name>
    <name type="common">Human</name>
    <dbReference type="NCBI Taxonomy" id="9606"/>
    <lineage>
        <taxon>Eukaryota</taxon>
        <taxon>Metazoa</taxon>
        <taxon>Chordata</taxon>
        <taxon>Craniata</taxon>
        <taxon>Vertebrata</taxon>
        <taxon>Euteleostomi</taxon>
        <taxon>Mammalia</taxon>
        <taxon>Eutheria</taxon>
        <taxon>Euarchontoglires</taxon>
        <taxon>Primates</taxon>
        <taxon>Haplorrhini</taxon>
        <taxon>Catarrhini</taxon>
        <taxon>Hominidae</taxon>
        <taxon>Homo</taxon>
    </lineage>
</organism>
<name>GOLM1_HUMAN</name>
<comment type="function">
    <text>Unknown. Cellular response protein to viral infection.</text>
</comment>
<comment type="subunit">
    <text evidence="10">Interacts with DYM.</text>
</comment>
<comment type="interaction">
    <interactant intactId="EBI-712073">
        <id>Q8NBJ4</id>
    </interactant>
    <interactant intactId="EBI-742038">
        <id>Q9P2A4</id>
        <label>ABI3</label>
    </interactant>
    <organismsDiffer>false</organismsDiffer>
    <experiments>3</experiments>
</comment>
<comment type="interaction">
    <interactant intactId="EBI-712073">
        <id>Q8NBJ4</id>
    </interactant>
    <interactant intactId="EBI-11957045">
        <id>Q9NVV5-2</id>
        <label>AIG1</label>
    </interactant>
    <organismsDiffer>false</organismsDiffer>
    <experiments>3</experiments>
</comment>
<comment type="interaction">
    <interactant intactId="EBI-712073">
        <id>Q8NBJ4</id>
    </interactant>
    <interactant intactId="EBI-12109402">
        <id>Q86W74-2</id>
        <label>ANKRD46</label>
    </interactant>
    <organismsDiffer>false</organismsDiffer>
    <experiments>3</experiments>
</comment>
<comment type="interaction">
    <interactant intactId="EBI-712073">
        <id>Q8NBJ4</id>
    </interactant>
    <interactant intactId="EBI-12092171">
        <id>Q12797-6</id>
        <label>ASPH</label>
    </interactant>
    <organismsDiffer>false</organismsDiffer>
    <experiments>3</experiments>
</comment>
<comment type="interaction">
    <interactant intactId="EBI-712073">
        <id>Q8NBJ4</id>
    </interactant>
    <interactant intactId="EBI-78035">
        <id>Q07817</id>
        <label>BCL2L1</label>
    </interactant>
    <organismsDiffer>false</organismsDiffer>
    <experiments>3</experiments>
</comment>
<comment type="interaction">
    <interactant intactId="EBI-712073">
        <id>Q8NBJ4</id>
    </interactant>
    <interactant intactId="EBI-12062109">
        <id>Q86Z23</id>
        <label>C1QL4</label>
    </interactant>
    <organismsDiffer>false</organismsDiffer>
    <experiments>3</experiments>
</comment>
<comment type="interaction">
    <interactant intactId="EBI-712073">
        <id>Q8NBJ4</id>
    </interactant>
    <interactant intactId="EBI-358858">
        <id>O14735</id>
        <label>CDIPT</label>
    </interactant>
    <organismsDiffer>false</organismsDiffer>
    <experiments>3</experiments>
</comment>
<comment type="interaction">
    <interactant intactId="EBI-712073">
        <id>Q8NBJ4</id>
    </interactant>
    <interactant intactId="EBI-9316372">
        <id>O14493</id>
        <label>CLDN4</label>
    </interactant>
    <organismsDiffer>false</organismsDiffer>
    <experiments>3</experiments>
</comment>
<comment type="interaction">
    <interactant intactId="EBI-712073">
        <id>Q8NBJ4</id>
    </interactant>
    <interactant intactId="EBI-11959453">
        <id>Q8NHS1</id>
        <label>CLDND2</label>
    </interactant>
    <organismsDiffer>false</organismsDiffer>
    <experiments>3</experiments>
</comment>
<comment type="interaction">
    <interactant intactId="EBI-712073">
        <id>Q8NBJ4</id>
    </interactant>
    <interactant intactId="EBI-2835965">
        <id>Q9BT09</id>
        <label>CNPY3</label>
    </interactant>
    <organismsDiffer>false</organismsDiffer>
    <experiments>3</experiments>
</comment>
<comment type="interaction">
    <interactant intactId="EBI-712073">
        <id>Q8NBJ4</id>
    </interactant>
    <interactant intactId="EBI-2806959">
        <id>Q6ICB0</id>
        <label>DESI1</label>
    </interactant>
    <organismsDiffer>false</organismsDiffer>
    <experiments>3</experiments>
</comment>
<comment type="interaction">
    <interactant intactId="EBI-712073">
        <id>Q8NBJ4</id>
    </interactant>
    <interactant intactId="EBI-2871106">
        <id>Q7RTS9</id>
        <label>DYM</label>
    </interactant>
    <organismsDiffer>false</organismsDiffer>
    <experiments>3</experiments>
</comment>
<comment type="interaction">
    <interactant intactId="EBI-712073">
        <id>Q8NBJ4</id>
    </interactant>
    <interactant intactId="EBI-297353">
        <id>P00533</id>
        <label>EGFR</label>
    </interactant>
    <organismsDiffer>false</organismsDiffer>
    <experiments>13</experiments>
</comment>
<comment type="interaction">
    <interactant intactId="EBI-712073">
        <id>Q8NBJ4</id>
    </interactant>
    <interactant intactId="EBI-3922408">
        <id>Q9Y231</id>
        <label>FUT9</label>
    </interactant>
    <organismsDiffer>false</organismsDiffer>
    <experiments>3</experiments>
</comment>
<comment type="interaction">
    <interactant intactId="EBI-712073">
        <id>Q8NBJ4</id>
    </interactant>
    <interactant intactId="EBI-3925203">
        <id>Q8N3T1</id>
        <label>GALNT15</label>
    </interactant>
    <organismsDiffer>false</organismsDiffer>
    <experiments>3</experiments>
</comment>
<comment type="interaction">
    <interactant intactId="EBI-712073">
        <id>Q8NBJ4</id>
    </interactant>
    <interactant intactId="EBI-3436637">
        <id>P01350</id>
        <label>GAST</label>
    </interactant>
    <organismsDiffer>false</organismsDiffer>
    <experiments>3</experiments>
</comment>
<comment type="interaction">
    <interactant intactId="EBI-712073">
        <id>Q8NBJ4</id>
    </interactant>
    <interactant intactId="EBI-2515857">
        <id>O43681</id>
        <label>GET3</label>
    </interactant>
    <organismsDiffer>false</organismsDiffer>
    <experiments>3</experiments>
</comment>
<comment type="interaction">
    <interactant intactId="EBI-712073">
        <id>Q8NBJ4</id>
    </interactant>
    <interactant intactId="EBI-989638">
        <id>P16278</id>
        <label>GLB1</label>
    </interactant>
    <organismsDiffer>false</organismsDiffer>
    <experiments>3</experiments>
</comment>
<comment type="interaction">
    <interactant intactId="EBI-712073">
        <id>Q8NBJ4</id>
    </interactant>
    <interactant intactId="EBI-12244272">
        <id>Q02747</id>
        <label>GUCA2A</label>
    </interactant>
    <organismsDiffer>false</organismsDiffer>
    <experiments>3</experiments>
</comment>
<comment type="interaction">
    <interactant intactId="EBI-712073">
        <id>Q8NBJ4</id>
    </interactant>
    <interactant intactId="EBI-1041722">
        <id>Q04756</id>
        <label>HGFAC</label>
    </interactant>
    <organismsDiffer>false</organismsDiffer>
    <experiments>3</experiments>
</comment>
<comment type="interaction">
    <interactant intactId="EBI-712073">
        <id>Q8NBJ4</id>
    </interactant>
    <interactant intactId="EBI-18053395">
        <id>Q7Z5P4</id>
        <label>HSD17B13</label>
    </interactant>
    <organismsDiffer>false</organismsDiffer>
    <experiments>3</experiments>
</comment>
<comment type="interaction">
    <interactant intactId="EBI-712073">
        <id>Q8NBJ4</id>
    </interactant>
    <interactant intactId="EBI-720480">
        <id>P24593</id>
        <label>IGFBP5</label>
    </interactant>
    <organismsDiffer>false</organismsDiffer>
    <experiments>3</experiments>
</comment>
<comment type="interaction">
    <interactant intactId="EBI-712073">
        <id>Q8NBJ4</id>
    </interactant>
    <interactant intactId="EBI-8503746">
        <id>Q9Y5U4</id>
        <label>INSIG2</label>
    </interactant>
    <organismsDiffer>false</organismsDiffer>
    <experiments>3</experiments>
</comment>
<comment type="interaction">
    <interactant intactId="EBI-712073">
        <id>Q8NBJ4</id>
    </interactant>
    <interactant intactId="EBI-10266796">
        <id>Q8N5M9</id>
        <label>JAGN1</label>
    </interactant>
    <organismsDiffer>false</organismsDiffer>
    <experiments>3</experiments>
</comment>
<comment type="interaction">
    <interactant intactId="EBI-712073">
        <id>Q8NBJ4</id>
    </interactant>
    <interactant intactId="EBI-718051">
        <id>O43526</id>
        <label>KCNQ2</label>
    </interactant>
    <organismsDiffer>false</organismsDiffer>
    <experiments>2</experiments>
</comment>
<comment type="interaction">
    <interactant intactId="EBI-712073">
        <id>Q8NBJ4</id>
    </interactant>
    <interactant intactId="EBI-8070286">
        <id>O43561-2</id>
        <label>LAT</label>
    </interactant>
    <organismsDiffer>false</organismsDiffer>
    <experiments>3</experiments>
</comment>
<comment type="interaction">
    <interactant intactId="EBI-712073">
        <id>Q8NBJ4</id>
    </interactant>
    <interactant intactId="EBI-8449636">
        <id>P30301</id>
        <label>MIP</label>
    </interactant>
    <organismsDiffer>false</organismsDiffer>
    <experiments>3</experiments>
</comment>
<comment type="interaction">
    <interactant intactId="EBI-712073">
        <id>Q8NBJ4</id>
    </interactant>
    <interactant intactId="EBI-713665">
        <id>P19404</id>
        <label>NDUFV2</label>
    </interactant>
    <organismsDiffer>false</organismsDiffer>
    <experiments>3</experiments>
</comment>
<comment type="interaction">
    <interactant intactId="EBI-712073">
        <id>Q8NBJ4</id>
    </interactant>
    <interactant intactId="EBI-721517">
        <id>Q99519</id>
        <label>NEU1</label>
    </interactant>
    <organismsDiffer>false</organismsDiffer>
    <experiments>3</experiments>
</comment>
<comment type="interaction">
    <interactant intactId="EBI-712073">
        <id>Q8NBJ4</id>
    </interactant>
    <interactant intactId="EBI-2802124">
        <id>Q92982</id>
        <label>NINJ1</label>
    </interactant>
    <organismsDiffer>false</organismsDiffer>
    <experiments>3</experiments>
</comment>
<comment type="interaction">
    <interactant intactId="EBI-712073">
        <id>Q8NBJ4</id>
    </interactant>
    <interactant intactId="EBI-1045534">
        <id>O00264</id>
        <label>PGRMC1</label>
    </interactant>
    <organismsDiffer>false</organismsDiffer>
    <experiments>3</experiments>
</comment>
<comment type="interaction">
    <interactant intactId="EBI-712073">
        <id>Q8NBJ4</id>
    </interactant>
    <interactant intactId="EBI-10246897">
        <id>Q5TAB7</id>
        <label>RIPPLY2</label>
    </interactant>
    <organismsDiffer>false</organismsDiffer>
    <experiments>3</experiments>
</comment>
<comment type="interaction">
    <interactant intactId="EBI-712073">
        <id>Q8NBJ4</id>
    </interactant>
    <interactant intactId="EBI-10197617">
        <id>P11686</id>
        <label>SFTPC</label>
    </interactant>
    <organismsDiffer>false</organismsDiffer>
    <experiments>3</experiments>
</comment>
<comment type="interaction">
    <interactant intactId="EBI-712073">
        <id>Q8NBJ4</id>
    </interactant>
    <interactant intactId="EBI-12002412">
        <id>Q86YT5</id>
        <label>SLC13A5</label>
    </interactant>
    <organismsDiffer>false</organismsDiffer>
    <experiments>3</experiments>
</comment>
<comment type="interaction">
    <interactant intactId="EBI-712073">
        <id>Q8NBJ4</id>
    </interactant>
    <interactant intactId="EBI-10294651">
        <id>Q99726</id>
        <label>SLC30A3</label>
    </interactant>
    <organismsDiffer>false</organismsDiffer>
    <experiments>3</experiments>
</comment>
<comment type="interaction">
    <interactant intactId="EBI-712073">
        <id>Q8NBJ4</id>
    </interactant>
    <interactant intactId="EBI-1054782">
        <id>Q8TB61</id>
        <label>SLC35B2</label>
    </interactant>
    <organismsDiffer>false</organismsDiffer>
    <experiments>3</experiments>
</comment>
<comment type="interaction">
    <interactant intactId="EBI-712073">
        <id>Q8NBJ4</id>
    </interactant>
    <interactant intactId="EBI-12409133">
        <id>Q9NY91</id>
        <label>SLC5A4</label>
    </interactant>
    <organismsDiffer>false</organismsDiffer>
    <experiments>3</experiments>
</comment>
<comment type="interaction">
    <interactant intactId="EBI-712073">
        <id>Q8NBJ4</id>
    </interactant>
    <interactant intactId="EBI-13041931">
        <id>Q9UIG8-2</id>
        <label>SLCO3A1</label>
    </interactant>
    <organismsDiffer>false</organismsDiffer>
    <experiments>3</experiments>
</comment>
<comment type="interaction">
    <interactant intactId="EBI-712073">
        <id>Q8NBJ4</id>
    </interactant>
    <interactant intactId="EBI-12908338">
        <id>Q96JF0-2</id>
        <label>ST6GAL2</label>
    </interactant>
    <organismsDiffer>false</organismsDiffer>
    <experiments>3</experiments>
</comment>
<comment type="interaction">
    <interactant intactId="EBI-712073">
        <id>Q8NBJ4</id>
    </interactant>
    <interactant intactId="EBI-12200293">
        <id>P0DN84</id>
        <label>STRIT1</label>
    </interactant>
    <organismsDiffer>false</organismsDiffer>
    <experiments>3</experiments>
</comment>
<comment type="interaction">
    <interactant intactId="EBI-712073">
        <id>Q8NBJ4</id>
    </interactant>
    <interactant intactId="EBI-714319">
        <id>P02787</id>
        <label>TF</label>
    </interactant>
    <organismsDiffer>false</organismsDiffer>
    <experiments>3</experiments>
</comment>
<comment type="interaction">
    <interactant intactId="EBI-712073">
        <id>Q8NBJ4</id>
    </interactant>
    <interactant intactId="EBI-310962">
        <id>Q9UPZ6</id>
        <label>THSD7A</label>
    </interactant>
    <organismsDiffer>false</organismsDiffer>
    <experiments>3</experiments>
</comment>
<comment type="interaction">
    <interactant intactId="EBI-712073">
        <id>Q8NBJ4</id>
    </interactant>
    <interactant intactId="EBI-1057733">
        <id>Q9BVC6</id>
        <label>TMEM109</label>
    </interactant>
    <organismsDiffer>false</organismsDiffer>
    <experiments>3</experiments>
</comment>
<comment type="interaction">
    <interactant intactId="EBI-712073">
        <id>Q8NBJ4</id>
    </interactant>
    <interactant intactId="EBI-2844246">
        <id>Q9NV12</id>
        <label>TMEM140</label>
    </interactant>
    <organismsDiffer>false</organismsDiffer>
    <experiments>3</experiments>
</comment>
<comment type="interaction">
    <interactant intactId="EBI-712073">
        <id>Q8NBJ4</id>
    </interactant>
    <interactant intactId="EBI-348587">
        <id>Q9BVK8</id>
        <label>TMEM147</label>
    </interactant>
    <organismsDiffer>false</organismsDiffer>
    <experiments>3</experiments>
</comment>
<comment type="interaction">
    <interactant intactId="EBI-712073">
        <id>Q8NBJ4</id>
    </interactant>
    <interactant intactId="EBI-2800645">
        <id>Q96HP8</id>
        <label>TMEM176A</label>
    </interactant>
    <organismsDiffer>false</organismsDiffer>
    <experiments>3</experiments>
</comment>
<comment type="interaction">
    <interactant intactId="EBI-712073">
        <id>Q8NBJ4</id>
    </interactant>
    <interactant intactId="EBI-2548832">
        <id>Q8N661</id>
        <label>TMEM86B</label>
    </interactant>
    <organismsDiffer>false</organismsDiffer>
    <experiments>3</experiments>
</comment>
<comment type="interaction">
    <interactant intactId="EBI-712073">
        <id>Q8NBJ4</id>
    </interactant>
    <interactant intactId="EBI-7333781">
        <id>Q9Y2Y6</id>
        <label>TMEM98</label>
    </interactant>
    <organismsDiffer>false</organismsDiffer>
    <experiments>3</experiments>
</comment>
<comment type="interaction">
    <interactant intactId="EBI-712073">
        <id>Q8NBJ4</id>
    </interactant>
    <interactant intactId="EBI-455283">
        <id>P42167</id>
        <label>TMPO</label>
    </interactant>
    <organismsDiffer>false</organismsDiffer>
    <experiments>3</experiments>
</comment>
<comment type="interaction">
    <interactant intactId="EBI-712073">
        <id>Q8NBJ4</id>
    </interactant>
    <interactant intactId="EBI-11425701">
        <id>Q9BVT8</id>
        <label>TMUB1</label>
    </interactant>
    <organismsDiffer>false</organismsDiffer>
    <experiments>3</experiments>
</comment>
<comment type="interaction">
    <interactant intactId="EBI-712073">
        <id>Q8NBJ4</id>
    </interactant>
    <interactant intactId="EBI-2820477">
        <id>Q71RG4</id>
        <label>TMUB2</label>
    </interactant>
    <organismsDiffer>false</organismsDiffer>
    <experiments>3</experiments>
</comment>
<comment type="interaction">
    <interactant intactId="EBI-712073">
        <id>Q8NBJ4</id>
    </interactant>
    <interactant intactId="EBI-346882">
        <id>Q99816</id>
        <label>TSG101</label>
    </interactant>
    <organismsDiffer>false</organismsDiffer>
    <experiments>3</experiments>
</comment>
<comment type="interaction">
    <interactant intactId="EBI-712073">
        <id>Q8NBJ4</id>
    </interactant>
    <interactant intactId="EBI-12190699">
        <id>Q6UX27-3</id>
        <label>VSTM1</label>
    </interactant>
    <organismsDiffer>false</organismsDiffer>
    <experiments>3</experiments>
</comment>
<comment type="subcellular location">
    <subcellularLocation>
        <location evidence="3 5">Golgi apparatus</location>
        <location evidence="3 5">cis-Golgi network membrane</location>
        <topology evidence="3 5">Single-pass type II membrane protein</topology>
    </subcellularLocation>
    <text>Early Golgi. Cycles via the cell surface and endosomes upon lumenal pH disruption.</text>
</comment>
<comment type="alternative products">
    <event type="alternative initiation"/>
    <isoform>
        <id>Q8NBJ4-1</id>
        <name>1</name>
        <sequence type="displayed"/>
    </isoform>
    <isoform>
        <id>Q8NBJ4-2</id>
        <name>2</name>
        <sequence type="described" ref="VSP_018782"/>
    </isoform>
</comment>
<comment type="tissue specificity">
    <text evidence="3 4">Widely expressed. Highly expressed in colon, prostate, trachea and stomach. Expressed at lower level in testis, muscle, lymphoid tissues, white blood cells and spleen. Predominantly expressed by cells of the epithelial lineage. Expressed at low level in normal liver. Expression significantly increases in virus (HBV, HCV) infected liver. Expression does not increase in liver disease due to non-viral causes (alcohol-induced liver disease, autoimmune hepatitis). Increased expression in hepatocytes appears to be a general feature of advanced liver disease. In liver tissue from patients with adult giant-cell hepatitis (GCH), it is strongly expressed in hepatocytes-derived syncytial giant cells. Constitutively expressed by biliary epithelial cells but not by hepatocytes.</text>
</comment>
<comment type="induction">
    <text evidence="6">Up-regulated in response to viral infection. Induced by the E1A adenoviral protein.</text>
</comment>
<comment type="PTM">
    <text evidence="3 7 8 9">Glycosylated.</text>
</comment>
<comment type="PTM">
    <text>Phosphorylation sites are present in the extracellular medium.</text>
</comment>
<comment type="similarity">
    <text evidence="13">Belongs to the GOLM family.</text>
</comment>
<comment type="caution">
    <text evidence="13">It is uncertain whether Met-1 or Met-2 is the initiator.</text>
</comment>
<gene>
    <name type="primary">GOLM1</name>
    <name type="synonym">C9orf155</name>
    <name type="synonym">GOLPH2</name>
    <name type="ORF">PSEC0242</name>
    <name type="ORF">UNQ686/PRO1326</name>
</gene>
<evidence type="ECO:0000255" key="1"/>
<evidence type="ECO:0000256" key="2">
    <source>
        <dbReference type="SAM" id="MobiDB-lite"/>
    </source>
</evidence>
<evidence type="ECO:0000269" key="3">
    <source>
    </source>
</evidence>
<evidence type="ECO:0000269" key="4">
    <source>
    </source>
</evidence>
<evidence type="ECO:0000269" key="5">
    <source>
    </source>
</evidence>
<evidence type="ECO:0000269" key="6">
    <source>
    </source>
</evidence>
<evidence type="ECO:0000269" key="7">
    <source>
    </source>
</evidence>
<evidence type="ECO:0000269" key="8">
    <source>
    </source>
</evidence>
<evidence type="ECO:0000269" key="9">
    <source>
    </source>
</evidence>
<evidence type="ECO:0000269" key="10">
    <source>
    </source>
</evidence>
<evidence type="ECO:0000269" key="11">
    <source>
    </source>
</evidence>
<evidence type="ECO:0000269" key="12">
    <source>
    </source>
</evidence>
<evidence type="ECO:0000305" key="13"/>
<evidence type="ECO:0007744" key="14">
    <source>
    </source>
</evidence>
<protein>
    <recommendedName>
        <fullName>Golgi membrane protein 1</fullName>
    </recommendedName>
    <alternativeName>
        <fullName>Golgi membrane protein GP73</fullName>
    </alternativeName>
    <alternativeName>
        <fullName>Golgi phosphoprotein 2</fullName>
    </alternativeName>
</protein>
<dbReference type="EMBL" id="AF236056">
    <property type="protein sequence ID" value="AAF44663.1"/>
    <property type="molecule type" value="mRNA"/>
</dbReference>
<dbReference type="EMBL" id="AY358593">
    <property type="protein sequence ID" value="AAQ88956.1"/>
    <property type="molecule type" value="mRNA"/>
</dbReference>
<dbReference type="EMBL" id="CR457201">
    <property type="protein sequence ID" value="CAG33482.1"/>
    <property type="molecule type" value="mRNA"/>
</dbReference>
<dbReference type="EMBL" id="AK075542">
    <property type="protein sequence ID" value="BAC11685.1"/>
    <property type="molecule type" value="mRNA"/>
</dbReference>
<dbReference type="EMBL" id="BC001740">
    <property type="protein sequence ID" value="AAH01740.1"/>
    <property type="molecule type" value="mRNA"/>
</dbReference>
<dbReference type="CCDS" id="CCDS35054.1">
    <molecule id="Q8NBJ4-1"/>
</dbReference>
<dbReference type="RefSeq" id="NP_057632.2">
    <molecule id="Q8NBJ4-1"/>
    <property type="nucleotide sequence ID" value="NM_016548.3"/>
</dbReference>
<dbReference type="RefSeq" id="NP_808800.1">
    <molecule id="Q8NBJ4-1"/>
    <property type="nucleotide sequence ID" value="NM_177937.3"/>
</dbReference>
<dbReference type="PDB" id="8YBC">
    <property type="method" value="X-ray"/>
    <property type="resolution" value="2.28 A"/>
    <property type="chains" value="A/B/C/D=111-177"/>
</dbReference>
<dbReference type="PDBsum" id="8YBC"/>
<dbReference type="SMR" id="Q8NBJ4"/>
<dbReference type="BioGRID" id="119432">
    <property type="interactions" value="151"/>
</dbReference>
<dbReference type="FunCoup" id="Q8NBJ4">
    <property type="interactions" value="787"/>
</dbReference>
<dbReference type="IntAct" id="Q8NBJ4">
    <property type="interactions" value="169"/>
</dbReference>
<dbReference type="MINT" id="Q8NBJ4"/>
<dbReference type="STRING" id="9606.ENSP00000373364"/>
<dbReference type="GlyConnect" id="1281">
    <property type="glycosylation" value="33 N-Linked glycans (2 sites)"/>
</dbReference>
<dbReference type="GlyCosmos" id="Q8NBJ4">
    <property type="glycosylation" value="8 sites, 34 glycans"/>
</dbReference>
<dbReference type="GlyGen" id="Q8NBJ4">
    <property type="glycosylation" value="18 sites, 57 N-linked glycans (2 sites), 4 O-linked glycans (14 sites)"/>
</dbReference>
<dbReference type="iPTMnet" id="Q8NBJ4"/>
<dbReference type="MetOSite" id="Q8NBJ4"/>
<dbReference type="PhosphoSitePlus" id="Q8NBJ4"/>
<dbReference type="SwissPalm" id="Q8NBJ4"/>
<dbReference type="BioMuta" id="GOLM1"/>
<dbReference type="DMDM" id="51316027"/>
<dbReference type="jPOST" id="Q8NBJ4"/>
<dbReference type="MassIVE" id="Q8NBJ4"/>
<dbReference type="PaxDb" id="9606-ENSP00000373364"/>
<dbReference type="PeptideAtlas" id="Q8NBJ4"/>
<dbReference type="ProteomicsDB" id="72776">
    <molecule id="Q8NBJ4-1"/>
</dbReference>
<dbReference type="ProteomicsDB" id="72777">
    <molecule id="Q8NBJ4-2"/>
</dbReference>
<dbReference type="Pumba" id="Q8NBJ4"/>
<dbReference type="Antibodypedia" id="2449">
    <property type="antibodies" value="754 antibodies from 40 providers"/>
</dbReference>
<dbReference type="DNASU" id="51280"/>
<dbReference type="Ensembl" id="ENST00000388711.7">
    <molecule id="Q8NBJ4-1"/>
    <property type="protein sequence ID" value="ENSP00000373363.3"/>
    <property type="gene ID" value="ENSG00000135052.16"/>
</dbReference>
<dbReference type="Ensembl" id="ENST00000388712.7">
    <molecule id="Q8NBJ4-1"/>
    <property type="protein sequence ID" value="ENSP00000373364.3"/>
    <property type="gene ID" value="ENSG00000135052.16"/>
</dbReference>
<dbReference type="GeneID" id="51280"/>
<dbReference type="KEGG" id="hsa:51280"/>
<dbReference type="MANE-Select" id="ENST00000388712.7">
    <property type="protein sequence ID" value="ENSP00000373364.3"/>
    <property type="RefSeq nucleotide sequence ID" value="NM_016548.4"/>
    <property type="RefSeq protein sequence ID" value="NP_057632.2"/>
</dbReference>
<dbReference type="UCSC" id="uc004aol.4">
    <molecule id="Q8NBJ4-1"/>
    <property type="organism name" value="human"/>
</dbReference>
<dbReference type="AGR" id="HGNC:15451"/>
<dbReference type="CTD" id="51280"/>
<dbReference type="DisGeNET" id="51280"/>
<dbReference type="GeneCards" id="GOLM1"/>
<dbReference type="HGNC" id="HGNC:15451">
    <property type="gene designation" value="GOLM1"/>
</dbReference>
<dbReference type="HPA" id="ENSG00000135052">
    <property type="expression patterns" value="Tissue enhanced (stomach)"/>
</dbReference>
<dbReference type="MIM" id="606804">
    <property type="type" value="gene"/>
</dbReference>
<dbReference type="neXtProt" id="NX_Q8NBJ4"/>
<dbReference type="OpenTargets" id="ENSG00000135052"/>
<dbReference type="PharmGKB" id="PA28811"/>
<dbReference type="VEuPathDB" id="HostDB:ENSG00000135052"/>
<dbReference type="eggNOG" id="ENOG502S080">
    <property type="taxonomic scope" value="Eukaryota"/>
</dbReference>
<dbReference type="GeneTree" id="ENSGT00530000063675"/>
<dbReference type="HOGENOM" id="CLU_055640_0_0_1"/>
<dbReference type="InParanoid" id="Q8NBJ4"/>
<dbReference type="OMA" id="DVYWFQK"/>
<dbReference type="OrthoDB" id="9947543at2759"/>
<dbReference type="PAN-GO" id="Q8NBJ4">
    <property type="GO annotations" value="1 GO annotation based on evolutionary models"/>
</dbReference>
<dbReference type="PhylomeDB" id="Q8NBJ4"/>
<dbReference type="TreeFam" id="TF331127"/>
<dbReference type="PathwayCommons" id="Q8NBJ4"/>
<dbReference type="Reactome" id="R-HSA-381426">
    <property type="pathway name" value="Regulation of Insulin-like Growth Factor (IGF) transport and uptake by Insulin-like Growth Factor Binding Proteins (IGFBPs)"/>
</dbReference>
<dbReference type="Reactome" id="R-HSA-8957275">
    <property type="pathway name" value="Post-translational protein phosphorylation"/>
</dbReference>
<dbReference type="SignaLink" id="Q8NBJ4"/>
<dbReference type="BioGRID-ORCS" id="51280">
    <property type="hits" value="12 hits in 1155 CRISPR screens"/>
</dbReference>
<dbReference type="ChiTaRS" id="GOLM1">
    <property type="organism name" value="human"/>
</dbReference>
<dbReference type="GeneWiki" id="GOLM1"/>
<dbReference type="GenomeRNAi" id="51280"/>
<dbReference type="Pharos" id="Q8NBJ4">
    <property type="development level" value="Tbio"/>
</dbReference>
<dbReference type="PRO" id="PR:Q8NBJ4"/>
<dbReference type="Proteomes" id="UP000005640">
    <property type="component" value="Chromosome 9"/>
</dbReference>
<dbReference type="RNAct" id="Q8NBJ4">
    <property type="molecule type" value="protein"/>
</dbReference>
<dbReference type="Bgee" id="ENSG00000135052">
    <property type="expression patterns" value="Expressed in palpebral conjunctiva and 182 other cell types or tissues"/>
</dbReference>
<dbReference type="ExpressionAtlas" id="Q8NBJ4">
    <property type="expression patterns" value="baseline and differential"/>
</dbReference>
<dbReference type="GO" id="GO:0005788">
    <property type="term" value="C:endoplasmic reticulum lumen"/>
    <property type="evidence" value="ECO:0000304"/>
    <property type="project" value="Reactome"/>
</dbReference>
<dbReference type="GO" id="GO:0005615">
    <property type="term" value="C:extracellular space"/>
    <property type="evidence" value="ECO:0007005"/>
    <property type="project" value="UniProtKB"/>
</dbReference>
<dbReference type="GO" id="GO:0005794">
    <property type="term" value="C:Golgi apparatus"/>
    <property type="evidence" value="ECO:0000314"/>
    <property type="project" value="HPA"/>
</dbReference>
<dbReference type="GO" id="GO:0005886">
    <property type="term" value="C:plasma membrane"/>
    <property type="evidence" value="ECO:0000304"/>
    <property type="project" value="ProtInc"/>
</dbReference>
<dbReference type="GO" id="GO:0006997">
    <property type="term" value="P:nucleus organization"/>
    <property type="evidence" value="ECO:0007669"/>
    <property type="project" value="Ensembl"/>
</dbReference>
<dbReference type="GO" id="GO:0019216">
    <property type="term" value="P:regulation of lipid metabolic process"/>
    <property type="evidence" value="ECO:0007669"/>
    <property type="project" value="Ensembl"/>
</dbReference>
<dbReference type="InterPro" id="IPR026139">
    <property type="entry name" value="GOLM1/CASC4"/>
</dbReference>
<dbReference type="PANTHER" id="PTHR15896:SF8">
    <property type="entry name" value="GOLGI MEMBRANE PROTEIN 1"/>
    <property type="match status" value="1"/>
</dbReference>
<dbReference type="PANTHER" id="PTHR15896">
    <property type="entry name" value="GOLGI PHOSPHOPROTEIN 2/GP73-RELATED"/>
    <property type="match status" value="1"/>
</dbReference>
<dbReference type="PRINTS" id="PR02084">
    <property type="entry name" value="GOLM1CASC4"/>
</dbReference>
<proteinExistence type="evidence at protein level"/>
<keyword id="KW-0002">3D-structure</keyword>
<keyword id="KW-0007">Acetylation</keyword>
<keyword id="KW-0024">Alternative initiation</keyword>
<keyword id="KW-0175">Coiled coil</keyword>
<keyword id="KW-0325">Glycoprotein</keyword>
<keyword id="KW-0333">Golgi apparatus</keyword>
<keyword id="KW-0472">Membrane</keyword>
<keyword id="KW-0597">Phosphoprotein</keyword>
<keyword id="KW-1267">Proteomics identification</keyword>
<keyword id="KW-1185">Reference proteome</keyword>
<keyword id="KW-0735">Signal-anchor</keyword>
<keyword id="KW-0812">Transmembrane</keyword>
<keyword id="KW-1133">Transmembrane helix</keyword>
<feature type="chain" id="PRO_0000021356" description="Golgi membrane protein 1">
    <location>
        <begin position="1"/>
        <end position="401"/>
    </location>
</feature>
<feature type="topological domain" description="Cytoplasmic" evidence="1">
    <location>
        <begin position="1"/>
        <end position="12"/>
    </location>
</feature>
<feature type="transmembrane region" description="Helical; Signal-anchor for type II membrane protein" evidence="1">
    <location>
        <begin position="13"/>
        <end position="35"/>
    </location>
</feature>
<feature type="topological domain" description="Lumenal" evidence="1">
    <location>
        <begin position="36"/>
        <end position="401"/>
    </location>
</feature>
<feature type="region of interest" description="Disordered" evidence="2">
    <location>
        <begin position="178"/>
        <end position="401"/>
    </location>
</feature>
<feature type="coiled-coil region" evidence="1">
    <location>
        <begin position="40"/>
        <end position="205"/>
    </location>
</feature>
<feature type="compositionally biased region" description="Polar residues" evidence="2">
    <location>
        <begin position="228"/>
        <end position="238"/>
    </location>
</feature>
<feature type="compositionally biased region" description="Basic and acidic residues" evidence="2">
    <location>
        <begin position="244"/>
        <end position="255"/>
    </location>
</feature>
<feature type="compositionally biased region" description="Basic and acidic residues" evidence="2">
    <location>
        <begin position="264"/>
        <end position="285"/>
    </location>
</feature>
<feature type="compositionally biased region" description="Gly residues" evidence="2">
    <location>
        <begin position="286"/>
        <end position="295"/>
    </location>
</feature>
<feature type="compositionally biased region" description="Polar residues" evidence="2">
    <location>
        <begin position="298"/>
        <end position="312"/>
    </location>
</feature>
<feature type="compositionally biased region" description="Acidic residues" evidence="2">
    <location>
        <begin position="350"/>
        <end position="360"/>
    </location>
</feature>
<feature type="compositionally biased region" description="Basic and acidic residues" evidence="2">
    <location>
        <begin position="381"/>
        <end position="395"/>
    </location>
</feature>
<feature type="modified residue" description="N-acetylmethionine" evidence="11">
    <location>
        <position position="1"/>
    </location>
</feature>
<feature type="modified residue" description="Phosphoserine" evidence="14">
    <location>
        <position position="187"/>
    </location>
</feature>
<feature type="modified residue" description="Phosphoserine; by FAM20C" evidence="12">
    <location>
        <position position="309"/>
    </location>
</feature>
<feature type="glycosylation site" description="N-linked (GlcNAc...) (complex) asparagine" evidence="7 8 9">
    <location>
        <position position="109"/>
    </location>
</feature>
<feature type="glycosylation site" description="N-linked (GlcNAc...) asparagine" evidence="1">
    <location>
        <position position="144"/>
    </location>
</feature>
<feature type="glycosylation site" description="N-linked (GlcNAc...) asparagine" evidence="1">
    <location>
        <position position="398"/>
    </location>
</feature>
<feature type="splice variant" id="VSP_018782" description="In isoform 2." evidence="13">
    <location>
        <begin position="1"/>
        <end position="10"/>
    </location>
</feature>
<feature type="sequence variant" id="VAR_053922" description="In dbSNP:rs2297002.">
    <original>H</original>
    <variation>R</variation>
    <location>
        <position position="217"/>
    </location>
</feature>
<feature type="sequence conflict" description="In Ref. 3; CAG33482." evidence="13" ref="3">
    <original>Q</original>
    <variation>R</variation>
    <location>
        <position position="249"/>
    </location>
</feature>
<accession>Q8NBJ4</accession>
<accession>Q6IAF4</accession>
<accession>Q9NRB9</accession>
<reference key="1">
    <citation type="journal article" date="2000" name="Gene">
        <title>GP73, a novel Golgi-localized protein upregulated by viral infection.</title>
        <authorList>
            <person name="Kladney R.D."/>
            <person name="Bulla G.A."/>
            <person name="Guo L."/>
            <person name="Mason A.L."/>
            <person name="Tollefson A.E."/>
            <person name="Simon D.J."/>
            <person name="Koutoubi Z."/>
            <person name="Fimmel C.J."/>
        </authorList>
    </citation>
    <scope>NUCLEOTIDE SEQUENCE [MRNA]</scope>
    <scope>ALTERNATIVE INITIATION</scope>
    <scope>GLYCOSYLATION</scope>
    <scope>TISSUE SPECIFICITY</scope>
    <scope>SUBCELLULAR LOCATION</scope>
    <source>
        <tissue>Liver</tissue>
    </source>
</reference>
<reference key="2">
    <citation type="journal article" date="2003" name="Genome Res.">
        <title>The secreted protein discovery initiative (SPDI), a large-scale effort to identify novel human secreted and transmembrane proteins: a bioinformatics assessment.</title>
        <authorList>
            <person name="Clark H.F."/>
            <person name="Gurney A.L."/>
            <person name="Abaya E."/>
            <person name="Baker K."/>
            <person name="Baldwin D.T."/>
            <person name="Brush J."/>
            <person name="Chen J."/>
            <person name="Chow B."/>
            <person name="Chui C."/>
            <person name="Crowley C."/>
            <person name="Currell B."/>
            <person name="Deuel B."/>
            <person name="Dowd P."/>
            <person name="Eaton D."/>
            <person name="Foster J.S."/>
            <person name="Grimaldi C."/>
            <person name="Gu Q."/>
            <person name="Hass P.E."/>
            <person name="Heldens S."/>
            <person name="Huang A."/>
            <person name="Kim H.S."/>
            <person name="Klimowski L."/>
            <person name="Jin Y."/>
            <person name="Johnson S."/>
            <person name="Lee J."/>
            <person name="Lewis L."/>
            <person name="Liao D."/>
            <person name="Mark M.R."/>
            <person name="Robbie E."/>
            <person name="Sanchez C."/>
            <person name="Schoenfeld J."/>
            <person name="Seshagiri S."/>
            <person name="Simmons L."/>
            <person name="Singh J."/>
            <person name="Smith V."/>
            <person name="Stinson J."/>
            <person name="Vagts A."/>
            <person name="Vandlen R.L."/>
            <person name="Watanabe C."/>
            <person name="Wieand D."/>
            <person name="Woods K."/>
            <person name="Xie M.-H."/>
            <person name="Yansura D.G."/>
            <person name="Yi S."/>
            <person name="Yu G."/>
            <person name="Yuan J."/>
            <person name="Zhang M."/>
            <person name="Zhang Z."/>
            <person name="Goddard A.D."/>
            <person name="Wood W.I."/>
            <person name="Godowski P.J."/>
            <person name="Gray A.M."/>
        </authorList>
    </citation>
    <scope>NUCLEOTIDE SEQUENCE [LARGE SCALE MRNA]</scope>
</reference>
<reference key="3">
    <citation type="submission" date="2004-06" db="EMBL/GenBank/DDBJ databases">
        <title>Cloning of human full open reading frames in Gateway(TM) system entry vector (pDONR201).</title>
        <authorList>
            <person name="Ebert L."/>
            <person name="Schick M."/>
            <person name="Neubert P."/>
            <person name="Schatten R."/>
            <person name="Henze S."/>
            <person name="Korn B."/>
        </authorList>
    </citation>
    <scope>NUCLEOTIDE SEQUENCE [LARGE SCALE MRNA]</scope>
</reference>
<reference key="4">
    <citation type="journal article" date="2005" name="DNA Res.">
        <title>Signal sequence and keyword trap in silico for selection of full-length human cDNAs encoding secretion or membrane proteins from oligo-capped cDNA libraries.</title>
        <authorList>
            <person name="Otsuki T."/>
            <person name="Ota T."/>
            <person name="Nishikawa T."/>
            <person name="Hayashi K."/>
            <person name="Suzuki Y."/>
            <person name="Yamamoto J."/>
            <person name="Wakamatsu A."/>
            <person name="Kimura K."/>
            <person name="Sakamoto K."/>
            <person name="Hatano N."/>
            <person name="Kawai Y."/>
            <person name="Ishii S."/>
            <person name="Saito K."/>
            <person name="Kojima S."/>
            <person name="Sugiyama T."/>
            <person name="Ono T."/>
            <person name="Okano K."/>
            <person name="Yoshikawa Y."/>
            <person name="Aotsuka S."/>
            <person name="Sasaki N."/>
            <person name="Hattori A."/>
            <person name="Okumura K."/>
            <person name="Nagai K."/>
            <person name="Sugano S."/>
            <person name="Isogai T."/>
        </authorList>
    </citation>
    <scope>NUCLEOTIDE SEQUENCE [LARGE SCALE MRNA]</scope>
    <source>
        <tissue>Teratocarcinoma</tissue>
    </source>
</reference>
<reference key="5">
    <citation type="journal article" date="2004" name="Genome Res.">
        <title>The status, quality, and expansion of the NIH full-length cDNA project: the Mammalian Gene Collection (MGC).</title>
        <authorList>
            <consortium name="The MGC Project Team"/>
        </authorList>
    </citation>
    <scope>NUCLEOTIDE SEQUENCE [LARGE SCALE MRNA]</scope>
    <source>
        <tissue>Eye</tissue>
    </source>
</reference>
<reference key="6">
    <citation type="journal article" date="2002" name="Traffic">
        <title>Cycling of early Golgi proteins via the cell surface and endosomes upon lumenal pH disruption.</title>
        <authorList>
            <person name="Puri S."/>
            <person name="Bachert C."/>
            <person name="Fimmel C.J."/>
            <person name="Linstedt A.D."/>
        </authorList>
    </citation>
    <scope>SUBCELLULAR LOCATION</scope>
</reference>
<reference key="7">
    <citation type="journal article" date="2002" name="Hepatology">
        <title>Expression of GP73, a resident Golgi membrane protein, in viral and nonviral liver disease.</title>
        <authorList>
            <person name="Kladney R.D."/>
            <person name="Cui X."/>
            <person name="Bulla G.A."/>
            <person name="Brunt E.M."/>
            <person name="Fimmel C.J."/>
        </authorList>
    </citation>
    <scope>TISSUE SPECIFICITY</scope>
</reference>
<reference key="8">
    <citation type="journal article" date="2002" name="Virology">
        <title>Upregulation of the Golgi protein GP73 by adenovirus infection requires the E1A CtBP interaction domain.</title>
        <authorList>
            <person name="Kladney R.D."/>
            <person name="Tollefson A.E."/>
            <person name="Wold W.S."/>
            <person name="Fimmel C.J."/>
        </authorList>
    </citation>
    <scope>INDUCTION BY VIRAL INFECTION</scope>
</reference>
<reference key="9">
    <citation type="journal article" date="2005" name="J. Proteome Res.">
        <title>Human plasma N-glycoproteome analysis by immunoaffinity subtraction, hydrazide chemistry, and mass spectrometry.</title>
        <authorList>
            <person name="Liu T."/>
            <person name="Qian W.-J."/>
            <person name="Gritsenko M.A."/>
            <person name="Camp D.G. II"/>
            <person name="Monroe M.E."/>
            <person name="Moore R.J."/>
            <person name="Smith R.D."/>
        </authorList>
    </citation>
    <scope>GLYCOSYLATION [LARGE SCALE ANALYSIS] AT ASN-109</scope>
    <source>
        <tissue>Plasma</tissue>
    </source>
</reference>
<reference key="10">
    <citation type="journal article" date="2006" name="J. Proteome Res.">
        <title>Identification of N-linked glycoproteins in human saliva by glycoprotein capture and mass spectrometry.</title>
        <authorList>
            <person name="Ramachandran P."/>
            <person name="Boontheung P."/>
            <person name="Xie Y."/>
            <person name="Sondej M."/>
            <person name="Wong D.T."/>
            <person name="Loo J.A."/>
        </authorList>
    </citation>
    <scope>GLYCOSYLATION [LARGE SCALE ANALYSIS] AT ASN-109</scope>
    <source>
        <tissue>Saliva</tissue>
    </source>
</reference>
<reference key="11">
    <citation type="journal article" date="2009" name="Mol. Cell. Proteomics">
        <title>A strategy for precise and large scale identification of core fucosylated glycoproteins.</title>
        <authorList>
            <person name="Jia W."/>
            <person name="Lu Z."/>
            <person name="Fu Y."/>
            <person name="Wang H.P."/>
            <person name="Wang L.H."/>
            <person name="Chi H."/>
            <person name="Yuan Z.F."/>
            <person name="Zheng Z.B."/>
            <person name="Song L.N."/>
            <person name="Han H.H."/>
            <person name="Liang Y.M."/>
            <person name="Wang J.L."/>
            <person name="Cai Y."/>
            <person name="Zhang Y.K."/>
            <person name="Deng Y.L."/>
            <person name="Ying W.T."/>
            <person name="He S.M."/>
            <person name="Qian X.H."/>
        </authorList>
    </citation>
    <scope>GLYCOSYLATION AT ASN-109</scope>
</reference>
<reference key="12">
    <citation type="journal article" date="2011" name="Hum. Mutat.">
        <title>Dymeclin, the gene underlying Dyggve-Melchior-Clausen syndrome, encodes a protein integral to extracellular matrix and Golgi organization and is associated with protein secretion pathways critical in bone development.</title>
        <authorList>
            <person name="Denais C."/>
            <person name="Dent C.L."/>
            <person name="Southgate L."/>
            <person name="Hoyle J."/>
            <person name="Dafou D."/>
            <person name="Trembath R.C."/>
            <person name="Machado R.D."/>
        </authorList>
    </citation>
    <scope>INTERACTION WITH DYM</scope>
</reference>
<reference key="13">
    <citation type="journal article" date="2014" name="J. Proteomics">
        <title>An enzyme assisted RP-RPLC approach for in-depth analysis of human liver phosphoproteome.</title>
        <authorList>
            <person name="Bian Y."/>
            <person name="Song C."/>
            <person name="Cheng K."/>
            <person name="Dong M."/>
            <person name="Wang F."/>
            <person name="Huang J."/>
            <person name="Sun D."/>
            <person name="Wang L."/>
            <person name="Ye M."/>
            <person name="Zou H."/>
        </authorList>
    </citation>
    <scope>PHOSPHORYLATION [LARGE SCALE ANALYSIS] AT SER-187</scope>
    <scope>IDENTIFICATION BY MASS SPECTROMETRY [LARGE SCALE ANALYSIS]</scope>
    <source>
        <tissue>Liver</tissue>
    </source>
</reference>
<reference key="14">
    <citation type="journal article" date="2015" name="Cell">
        <title>A single kinase generates the majority of the secreted phosphoproteome.</title>
        <authorList>
            <person name="Tagliabracci V.S."/>
            <person name="Wiley S.E."/>
            <person name="Guo X."/>
            <person name="Kinch L.N."/>
            <person name="Durrant E."/>
            <person name="Wen J."/>
            <person name="Xiao J."/>
            <person name="Cui J."/>
            <person name="Nguyen K.B."/>
            <person name="Engel J.L."/>
            <person name="Coon J.J."/>
            <person name="Grishin N."/>
            <person name="Pinna L.A."/>
            <person name="Pagliarini D.J."/>
            <person name="Dixon J.E."/>
        </authorList>
    </citation>
    <scope>PHOSPHORYLATION AT SER-309</scope>
</reference>
<reference key="15">
    <citation type="journal article" date="2015" name="Cell Rep.">
        <title>An organellar nalpha-acetyltransferase, naa60, acetylates cytosolic N termini of transmembrane proteins and maintains Golgi integrity.</title>
        <authorList>
            <person name="Aksnes H."/>
            <person name="Van Damme P."/>
            <person name="Goris M."/>
            <person name="Starheim K.K."/>
            <person name="Marie M."/>
            <person name="Stoeve S.I."/>
            <person name="Hoel C."/>
            <person name="Kalvik T.V."/>
            <person name="Hole K."/>
            <person name="Glomnes N."/>
            <person name="Furnes C."/>
            <person name="Ljostveit S."/>
            <person name="Ziegler M."/>
            <person name="Niere M."/>
            <person name="Gevaert K."/>
            <person name="Arnesen T."/>
        </authorList>
    </citation>
    <scope>ACETYLATION AT MET-1</scope>
</reference>
<reference key="16">
    <citation type="journal article" date="2015" name="Proteomics">
        <title>N-terminome analysis of the human mitochondrial proteome.</title>
        <authorList>
            <person name="Vaca Jacome A.S."/>
            <person name="Rabilloud T."/>
            <person name="Schaeffer-Reiss C."/>
            <person name="Rompais M."/>
            <person name="Ayoub D."/>
            <person name="Lane L."/>
            <person name="Bairoch A."/>
            <person name="Van Dorsselaer A."/>
            <person name="Carapito C."/>
        </authorList>
    </citation>
    <scope>IDENTIFICATION BY MASS SPECTROMETRY [LARGE SCALE ANALYSIS]</scope>
</reference>